<reference key="1">
    <citation type="journal article" date="2004" name="Oncogene">
        <title>Suppression subtractive hybridization and expression profiling identifies a unique set of genes overexpressed in non-small-cell lung cancer.</title>
        <authorList>
            <person name="Petroziello J."/>
            <person name="Yamane A."/>
            <person name="Westendorf L."/>
            <person name="Thompson M."/>
            <person name="McDonagh C."/>
            <person name="Cerveny C."/>
            <person name="Law C.-L."/>
            <person name="Wahl A."/>
            <person name="Carter P."/>
        </authorList>
    </citation>
    <scope>NUCLEOTIDE SEQUENCE [MRNA] (ISOFORM 1)</scope>
    <scope>INDUCTION</scope>
</reference>
<reference key="2">
    <citation type="journal article" date="2007" name="BMC Genomics">
        <title>The full-ORF clone resource of the German cDNA consortium.</title>
        <authorList>
            <person name="Bechtel S."/>
            <person name="Rosenfelder H."/>
            <person name="Duda A."/>
            <person name="Schmidt C.P."/>
            <person name="Ernst U."/>
            <person name="Wellenreuther R."/>
            <person name="Mehrle A."/>
            <person name="Schuster C."/>
            <person name="Bahr A."/>
            <person name="Bloecker H."/>
            <person name="Heubner D."/>
            <person name="Hoerlein A."/>
            <person name="Michel G."/>
            <person name="Wedler H."/>
            <person name="Koehrer K."/>
            <person name="Ottenwaelder B."/>
            <person name="Poustka A."/>
            <person name="Wiemann S."/>
            <person name="Schupp I."/>
        </authorList>
    </citation>
    <scope>NUCLEOTIDE SEQUENCE [LARGE SCALE MRNA] (ISOFORM 2)</scope>
    <scope>NUCLEOTIDE SEQUENCE [LARGE SCALE MRNA] OF 47-1390 (ISOFORM 1)</scope>
    <source>
        <tissue>Lymph node</tissue>
        <tissue>Testis</tissue>
    </source>
</reference>
<reference key="3">
    <citation type="journal article" date="2004" name="Genome Res.">
        <title>The status, quality, and expansion of the NIH full-length cDNA project: the Mammalian Gene Collection (MGC).</title>
        <authorList>
            <consortium name="The MGC Project Team"/>
        </authorList>
    </citation>
    <scope>NUCLEOTIDE SEQUENCE [LARGE SCALE MRNA] (ISOFORM 1)</scope>
    <source>
        <tissue>Cerebellum</tissue>
        <tissue>Cervix</tissue>
        <tissue>Eye</tissue>
    </source>
</reference>
<reference key="4">
    <citation type="journal article" date="2004" name="Nat. Genet.">
        <title>Complete sequencing and characterization of 21,243 full-length human cDNAs.</title>
        <authorList>
            <person name="Ota T."/>
            <person name="Suzuki Y."/>
            <person name="Nishikawa T."/>
            <person name="Otsuki T."/>
            <person name="Sugiyama T."/>
            <person name="Irie R."/>
            <person name="Wakamatsu A."/>
            <person name="Hayashi K."/>
            <person name="Sato H."/>
            <person name="Nagai K."/>
            <person name="Kimura K."/>
            <person name="Makita H."/>
            <person name="Sekine M."/>
            <person name="Obayashi M."/>
            <person name="Nishi T."/>
            <person name="Shibahara T."/>
            <person name="Tanaka T."/>
            <person name="Ishii S."/>
            <person name="Yamamoto J."/>
            <person name="Saito K."/>
            <person name="Kawai Y."/>
            <person name="Isono Y."/>
            <person name="Nakamura Y."/>
            <person name="Nagahari K."/>
            <person name="Murakami K."/>
            <person name="Yasuda T."/>
            <person name="Iwayanagi T."/>
            <person name="Wagatsuma M."/>
            <person name="Shiratori A."/>
            <person name="Sudo H."/>
            <person name="Hosoiri T."/>
            <person name="Kaku Y."/>
            <person name="Kodaira H."/>
            <person name="Kondo H."/>
            <person name="Sugawara M."/>
            <person name="Takahashi M."/>
            <person name="Kanda K."/>
            <person name="Yokoi T."/>
            <person name="Furuya T."/>
            <person name="Kikkawa E."/>
            <person name="Omura Y."/>
            <person name="Abe K."/>
            <person name="Kamihara K."/>
            <person name="Katsuta N."/>
            <person name="Sato K."/>
            <person name="Tanikawa M."/>
            <person name="Yamazaki M."/>
            <person name="Ninomiya K."/>
            <person name="Ishibashi T."/>
            <person name="Yamashita H."/>
            <person name="Murakawa K."/>
            <person name="Fujimori K."/>
            <person name="Tanai H."/>
            <person name="Kimata M."/>
            <person name="Watanabe M."/>
            <person name="Hiraoka S."/>
            <person name="Chiba Y."/>
            <person name="Ishida S."/>
            <person name="Ono Y."/>
            <person name="Takiguchi S."/>
            <person name="Watanabe S."/>
            <person name="Yosida M."/>
            <person name="Hotuta T."/>
            <person name="Kusano J."/>
            <person name="Kanehori K."/>
            <person name="Takahashi-Fujii A."/>
            <person name="Hara H."/>
            <person name="Tanase T.-O."/>
            <person name="Nomura Y."/>
            <person name="Togiya S."/>
            <person name="Komai F."/>
            <person name="Hara R."/>
            <person name="Takeuchi K."/>
            <person name="Arita M."/>
            <person name="Imose N."/>
            <person name="Musashino K."/>
            <person name="Yuuki H."/>
            <person name="Oshima A."/>
            <person name="Sasaki N."/>
            <person name="Aotsuka S."/>
            <person name="Yoshikawa Y."/>
            <person name="Matsunawa H."/>
            <person name="Ichihara T."/>
            <person name="Shiohata N."/>
            <person name="Sano S."/>
            <person name="Moriya S."/>
            <person name="Momiyama H."/>
            <person name="Satoh N."/>
            <person name="Takami S."/>
            <person name="Terashima Y."/>
            <person name="Suzuki O."/>
            <person name="Nakagawa S."/>
            <person name="Senoh A."/>
            <person name="Mizoguchi H."/>
            <person name="Goto Y."/>
            <person name="Shimizu F."/>
            <person name="Wakebe H."/>
            <person name="Hishigaki H."/>
            <person name="Watanabe T."/>
            <person name="Sugiyama A."/>
            <person name="Takemoto M."/>
            <person name="Kawakami B."/>
            <person name="Yamazaki M."/>
            <person name="Watanabe K."/>
            <person name="Kumagai A."/>
            <person name="Itakura S."/>
            <person name="Fukuzumi Y."/>
            <person name="Fujimori Y."/>
            <person name="Komiyama M."/>
            <person name="Tashiro H."/>
            <person name="Tanigami A."/>
            <person name="Fujiwara T."/>
            <person name="Ono T."/>
            <person name="Yamada K."/>
            <person name="Fujii Y."/>
            <person name="Ozaki K."/>
            <person name="Hirao M."/>
            <person name="Ohmori Y."/>
            <person name="Kawabata A."/>
            <person name="Hikiji T."/>
            <person name="Kobatake N."/>
            <person name="Inagaki H."/>
            <person name="Ikema Y."/>
            <person name="Okamoto S."/>
            <person name="Okitani R."/>
            <person name="Kawakami T."/>
            <person name="Noguchi S."/>
            <person name="Itoh T."/>
            <person name="Shigeta K."/>
            <person name="Senba T."/>
            <person name="Matsumura K."/>
            <person name="Nakajima Y."/>
            <person name="Mizuno T."/>
            <person name="Morinaga M."/>
            <person name="Sasaki M."/>
            <person name="Togashi T."/>
            <person name="Oyama M."/>
            <person name="Hata H."/>
            <person name="Watanabe M."/>
            <person name="Komatsu T."/>
            <person name="Mizushima-Sugano J."/>
            <person name="Satoh T."/>
            <person name="Shirai Y."/>
            <person name="Takahashi Y."/>
            <person name="Nakagawa K."/>
            <person name="Okumura K."/>
            <person name="Nagase T."/>
            <person name="Nomura N."/>
            <person name="Kikuchi H."/>
            <person name="Masuho Y."/>
            <person name="Yamashita R."/>
            <person name="Nakai K."/>
            <person name="Yada T."/>
            <person name="Nakamura Y."/>
            <person name="Ohara O."/>
            <person name="Isogai T."/>
            <person name="Sugano S."/>
        </authorList>
    </citation>
    <scope>NUCLEOTIDE SEQUENCE [LARGE SCALE MRNA] OF 1-978 (ISOFORM 1)</scope>
    <source>
        <tissue>Spleen</tissue>
    </source>
</reference>
<reference key="5">
    <citation type="journal article" date="2001" name="Genome Res.">
        <title>Gene expression profiling in human fetal liver and identification of tissue- and developmental-stage-specific genes through compiled expression profiles and efficient cloning of full-length cDNAs.</title>
        <authorList>
            <person name="Yu Y."/>
            <person name="Zhang C."/>
            <person name="Zhou G."/>
            <person name="Wu S."/>
            <person name="Qu X."/>
            <person name="Wei H."/>
            <person name="Xing G."/>
            <person name="Dong C."/>
            <person name="Zhai Y."/>
            <person name="Wan J."/>
            <person name="Ouyang S."/>
            <person name="Li L."/>
            <person name="Zhang S."/>
            <person name="Zhou K."/>
            <person name="Zhang Y."/>
            <person name="Wu C."/>
            <person name="He F."/>
        </authorList>
    </citation>
    <scope>NUCLEOTIDE SEQUENCE [LARGE SCALE MRNA] OF 813-1390</scope>
    <source>
        <tissue>Fetal liver</tissue>
    </source>
</reference>
<reference key="6">
    <citation type="journal article" date="2005" name="Lancet">
        <title>Gene-expression profiles to predict distant metastasis of lymph-node-negative primary breast cancer.</title>
        <authorList>
            <person name="Wang Y."/>
            <person name="Klijn J.G."/>
            <person name="Zhang Y."/>
            <person name="Sieuwerts A.M."/>
            <person name="Look M.P."/>
            <person name="Yang F."/>
            <person name="Talantov D."/>
            <person name="Timmermans M."/>
            <person name="Meijer-van Gelder M.E."/>
            <person name="Yu J."/>
            <person name="Jatkoe T."/>
            <person name="Berns E.M.J.J."/>
            <person name="Atkins D."/>
            <person name="Foekens J.A."/>
        </authorList>
    </citation>
    <scope>TISSUE SPECIFICITY</scope>
</reference>
<reference key="7">
    <citation type="journal article" date="2006" name="Cell">
        <title>Global, in vivo, and site-specific phosphorylation dynamics in signaling networks.</title>
        <authorList>
            <person name="Olsen J.V."/>
            <person name="Blagoev B."/>
            <person name="Gnad F."/>
            <person name="Macek B."/>
            <person name="Kumar C."/>
            <person name="Mortensen P."/>
            <person name="Mann M."/>
        </authorList>
    </citation>
    <scope>IDENTIFICATION BY MASS SPECTROMETRY [LARGE SCALE ANALYSIS]</scope>
    <source>
        <tissue>Cervix carcinoma</tissue>
    </source>
</reference>
<reference key="8">
    <citation type="journal article" date="2006" name="Genome Biol.">
        <title>A consensus prognostic gene expression classifier for ER positive breast cancer.</title>
        <authorList>
            <person name="Teschendorff A.E."/>
            <person name="Naderi A."/>
            <person name="Barbosa-Morais N.L."/>
            <person name="Pinder S.E."/>
            <person name="Ellis I.O."/>
            <person name="Aparicio S."/>
            <person name="Brenton J.D."/>
            <person name="Caldas C."/>
        </authorList>
    </citation>
    <scope>TISSUE SPECIFICITY</scope>
</reference>
<reference key="9">
    <citation type="journal article" date="2006" name="Mol. Cancer">
        <title>Cellular response to 5-fluorouracil (5-FU) in 5-FU-resistant colon cancer cell lines during treatment and recovery.</title>
        <authorList>
            <person name="De Angelis P.M."/>
            <person name="Svendsrud D.H."/>
            <person name="Kravik K.L."/>
            <person name="Stokke T."/>
        </authorList>
    </citation>
    <scope>INDUCTION</scope>
</reference>
<reference key="10">
    <citation type="journal article" date="2007" name="Mod. Pathol.">
        <title>Prognostic significance of drug-regulated genes in high-grade osteosarcoma.</title>
        <authorList>
            <person name="Fellenberg J."/>
            <person name="Bernd L."/>
            <person name="Delling G."/>
            <person name="Witte D."/>
            <person name="Zahlten-Hinguranage A."/>
        </authorList>
    </citation>
    <scope>TISSUE SPECIFICITY</scope>
</reference>
<reference key="11">
    <citation type="journal article" date="2007" name="Proc. Natl. Acad. Sci. U.S.A.">
        <title>ANCCA, an estrogen-regulated AAA+ ATPase coactivator for ERalpha, is required for coregulator occupancy and chromatin modification.</title>
        <authorList>
            <person name="Zou J.X."/>
            <person name="Revenko A.S."/>
            <person name="Li L.B."/>
            <person name="Gemo A.T."/>
            <person name="Chen H.-W."/>
        </authorList>
    </citation>
    <scope>FUNCTION</scope>
    <scope>INTERACTION WITH ESR1 AND NCOA3</scope>
    <scope>SUBCELLULAR LOCATION</scope>
    <scope>INDUCTION</scope>
    <scope>MUTAGENESIS OF LYS-473 AND GLU-532</scope>
</reference>
<reference key="12">
    <citation type="journal article" date="2008" name="Proc. Natl. Acad. Sci. U.S.A.">
        <title>A quantitative atlas of mitotic phosphorylation.</title>
        <authorList>
            <person name="Dephoure N."/>
            <person name="Zhou C."/>
            <person name="Villen J."/>
            <person name="Beausoleil S.A."/>
            <person name="Bakalarski C.E."/>
            <person name="Elledge S.J."/>
            <person name="Gygi S.P."/>
        </authorList>
    </citation>
    <scope>PHOSPHORYLATION [LARGE SCALE ANALYSIS] AT SER-746; SER-751; THR-1149; THR-1152 AND SER-1302</scope>
    <scope>IDENTIFICATION BY MASS SPECTROMETRY [LARGE SCALE ANALYSIS]</scope>
    <source>
        <tissue>Cervix carcinoma</tissue>
    </source>
</reference>
<reference key="13">
    <citation type="journal article" date="2009" name="Anal. Chem.">
        <title>Lys-N and trypsin cover complementary parts of the phosphoproteome in a refined SCX-based approach.</title>
        <authorList>
            <person name="Gauci S."/>
            <person name="Helbig A.O."/>
            <person name="Slijper M."/>
            <person name="Krijgsveld J."/>
            <person name="Heck A.J."/>
            <person name="Mohammed S."/>
        </authorList>
    </citation>
    <scope>IDENTIFICATION BY MASS SPECTROMETRY [LARGE SCALE ANALYSIS]</scope>
</reference>
<reference key="14">
    <citation type="journal article" date="2009" name="Sci. Signal.">
        <title>Quantitative phosphoproteomic analysis of T cell receptor signaling reveals system-wide modulation of protein-protein interactions.</title>
        <authorList>
            <person name="Mayya V."/>
            <person name="Lundgren D.H."/>
            <person name="Hwang S.-I."/>
            <person name="Rezaul K."/>
            <person name="Wu L."/>
            <person name="Eng J.K."/>
            <person name="Rodionov V."/>
            <person name="Han D.K."/>
        </authorList>
    </citation>
    <scope>PHOSPHORYLATION [LARGE SCALE ANALYSIS] AT SER-170 AND SER-1302</scope>
    <scope>IDENTIFICATION BY MASS SPECTROMETRY [LARGE SCALE ANALYSIS]</scope>
    <source>
        <tissue>Leukemic T-cell</tissue>
    </source>
</reference>
<reference key="15">
    <citation type="journal article" date="2010" name="Sci. Signal.">
        <title>Quantitative phosphoproteomics reveals widespread full phosphorylation site occupancy during mitosis.</title>
        <authorList>
            <person name="Olsen J.V."/>
            <person name="Vermeulen M."/>
            <person name="Santamaria A."/>
            <person name="Kumar C."/>
            <person name="Miller M.L."/>
            <person name="Jensen L.J."/>
            <person name="Gnad F."/>
            <person name="Cox J."/>
            <person name="Jensen T.S."/>
            <person name="Nigg E.A."/>
            <person name="Brunak S."/>
            <person name="Mann M."/>
        </authorList>
    </citation>
    <scope>PHOSPHORYLATION [LARGE SCALE ANALYSIS] AT SER-327; SER-337 AND SER-1302</scope>
    <scope>IDENTIFICATION BY MASS SPECTROMETRY [LARGE SCALE ANALYSIS]</scope>
    <source>
        <tissue>Cervix carcinoma</tissue>
    </source>
</reference>
<reference key="16">
    <citation type="journal article" date="2011" name="Sci. Signal.">
        <title>System-wide temporal characterization of the proteome and phosphoproteome of human embryonic stem cell differentiation.</title>
        <authorList>
            <person name="Rigbolt K.T."/>
            <person name="Prokhorova T.A."/>
            <person name="Akimov V."/>
            <person name="Henningsen J."/>
            <person name="Johansen P.T."/>
            <person name="Kratchmarova I."/>
            <person name="Kassem M."/>
            <person name="Mann M."/>
            <person name="Olsen J.V."/>
            <person name="Blagoev B."/>
        </authorList>
    </citation>
    <scope>PHOSPHORYLATION [LARGE SCALE ANALYSIS] AT SER-327</scope>
    <scope>IDENTIFICATION BY MASS SPECTROMETRY [LARGE SCALE ANALYSIS]</scope>
</reference>
<reference key="17">
    <citation type="journal article" date="2013" name="J. Proteome Res.">
        <title>Toward a comprehensive characterization of a human cancer cell phosphoproteome.</title>
        <authorList>
            <person name="Zhou H."/>
            <person name="Di Palma S."/>
            <person name="Preisinger C."/>
            <person name="Peng M."/>
            <person name="Polat A.N."/>
            <person name="Heck A.J."/>
            <person name="Mohammed S."/>
        </authorList>
    </citation>
    <scope>PHOSPHORYLATION [LARGE SCALE ANALYSIS] AT SER-60; SER-61; SER-165; SER-170; SER-327; SER-337; SER-342; SER-410; SER-1139; THR-1176; SER-1200; SER-1233; SER-1235; SER-1243; SER-1302 AND THR-1323</scope>
    <scope>IDENTIFICATION BY MASS SPECTROMETRY [LARGE SCALE ANALYSIS]</scope>
    <source>
        <tissue>Cervix carcinoma</tissue>
        <tissue>Erythroleukemia</tissue>
    </source>
</reference>
<reference key="18">
    <citation type="journal article" date="2014" name="J. Proteomics">
        <title>An enzyme assisted RP-RPLC approach for in-depth analysis of human liver phosphoproteome.</title>
        <authorList>
            <person name="Bian Y."/>
            <person name="Song C."/>
            <person name="Cheng K."/>
            <person name="Dong M."/>
            <person name="Wang F."/>
            <person name="Huang J."/>
            <person name="Sun D."/>
            <person name="Wang L."/>
            <person name="Ye M."/>
            <person name="Zou H."/>
        </authorList>
    </citation>
    <scope>PHOSPHORYLATION [LARGE SCALE ANALYSIS] AT SER-1200</scope>
    <scope>IDENTIFICATION BY MASS SPECTROMETRY [LARGE SCALE ANALYSIS]</scope>
    <source>
        <tissue>Liver</tissue>
    </source>
</reference>
<reference key="19">
    <citation type="journal article" date="2015" name="Genes Dev.">
        <title>Screen identifies bromodomain protein ZMYND8 in chromatin recognition of transcription-associated DNA damage that promotes homologous recombination.</title>
        <authorList>
            <person name="Gong F."/>
            <person name="Chiu L.Y."/>
            <person name="Cox B."/>
            <person name="Aymard F."/>
            <person name="Clouaire T."/>
            <person name="Leung J.W."/>
            <person name="Cammarata M."/>
            <person name="Perez M."/>
            <person name="Agarwal P."/>
            <person name="Brodbelt J.S."/>
            <person name="Legube G."/>
            <person name="Miller K.M."/>
        </authorList>
    </citation>
    <scope>SUBCELLULAR LOCATION</scope>
</reference>
<reference key="20">
    <citation type="journal article" date="2017" name="Nat. Struct. Mol. Biol.">
        <title>Site-specific mapping of the human SUMO proteome reveals co-modification with phosphorylation.</title>
        <authorList>
            <person name="Hendriks I.A."/>
            <person name="Lyon D."/>
            <person name="Young C."/>
            <person name="Jensen L.J."/>
            <person name="Vertegaal A.C."/>
            <person name="Nielsen M.L."/>
        </authorList>
    </citation>
    <scope>SUMOYLATION [LARGE SCALE ANALYSIS] AT LYS-125; LYS-317; LYS-1128; LYS-1148 AND LYS-1236</scope>
    <scope>IDENTIFICATION BY MASS SPECTROMETRY [LARGE SCALE ANALYSIS]</scope>
</reference>
<reference key="21">
    <citation type="journal article" date="2012" name="Cell">
        <title>Histone recognition and large-scale structural analysis of the human bromodomain family.</title>
        <authorList>
            <person name="Filippakopoulos P."/>
            <person name="Picaud S."/>
            <person name="Mangos M."/>
            <person name="Keates T."/>
            <person name="Lambert J.P."/>
            <person name="Barsyte-Lovejoy D."/>
            <person name="Felletar I."/>
            <person name="Volkmer R."/>
            <person name="Muller S."/>
            <person name="Pawson T."/>
            <person name="Gingras A.C."/>
            <person name="Arrowsmith C.H."/>
            <person name="Knapp S."/>
        </authorList>
    </citation>
    <scope>X-RAY CRYSTALLOGRAPHY (1.95 ANGSTROMS) OF 981-1108</scope>
    <scope>SUBUNIT</scope>
</reference>
<protein>
    <recommendedName>
        <fullName>ATPase family AAA domain-containing protein 2</fullName>
        <ecNumber>3.6.1.-</ecNumber>
    </recommendedName>
    <alternativeName>
        <fullName>AAA nuclear coregulator cancer-associated protein</fullName>
        <shortName>ANCCA</shortName>
    </alternativeName>
</protein>
<comment type="function">
    <text evidence="9">May be a transcriptional coactivator of the nuclear receptor ESR1 required to induce the expression of a subset of estradiol target genes, such as CCND1, MYC and E2F1. May play a role in the recruitment or occupancy of CREBBP at some ESR1 target gene promoters. May be required for histone hyperacetylation. Involved in the estrogen-induced cell proliferation and cell cycle progression of breast cancer cells.</text>
</comment>
<comment type="catalytic activity">
    <reaction>
        <text>ATP + H2O = ADP + phosphate + H(+)</text>
        <dbReference type="Rhea" id="RHEA:13065"/>
        <dbReference type="ChEBI" id="CHEBI:15377"/>
        <dbReference type="ChEBI" id="CHEBI:15378"/>
        <dbReference type="ChEBI" id="CHEBI:30616"/>
        <dbReference type="ChEBI" id="CHEBI:43474"/>
        <dbReference type="ChEBI" id="CHEBI:456216"/>
    </reaction>
</comment>
<comment type="subunit">
    <text evidence="9 10">Interacts with ESR1 and NCOA3 and these interactions are enhanced by estradiol. Interacts with acetylated lysine residues on histone H1.4, H2A, H2B and H3 (in vitro).</text>
</comment>
<comment type="interaction">
    <interactant intactId="EBI-6598454">
        <id>Q6PL18</id>
    </interactant>
    <interactant intactId="EBI-78473">
        <id>P03372</id>
        <label>ESR1</label>
    </interactant>
    <organismsDiffer>false</organismsDiffer>
    <experiments>5</experiments>
</comment>
<comment type="interaction">
    <interactant intactId="EBI-6598454">
        <id>Q6PL18</id>
    </interactant>
    <interactant intactId="EBI-81196">
        <id>Q9Y6Q9</id>
        <label>NCOA3</label>
    </interactant>
    <organismsDiffer>false</organismsDiffer>
    <experiments>2</experiments>
</comment>
<comment type="subcellular location">
    <subcellularLocation>
        <location evidence="9 11">Nucleus</location>
    </subcellularLocation>
</comment>
<comment type="alternative products">
    <event type="alternative splicing"/>
    <isoform>
        <id>Q6PL18-1</id>
        <name>1</name>
        <sequence type="displayed"/>
    </isoform>
    <isoform>
        <id>Q6PL18-2</id>
        <name>2</name>
        <sequence type="described" ref="VSP_015633 VSP_015634 VSP_015635"/>
    </isoform>
</comment>
<comment type="tissue specificity">
    <text evidence="5 7 8">Highly expressed in estrogen receptor positive breast tumors and in osteosarcoma tumors.</text>
</comment>
<comment type="induction">
    <text evidence="4 6 9">Up-regulated in breast, uterus, colon, ovary, and stomach tumors. Induced in breast cancer cells overexpressing NCOA3 or treated with estrogen. Down-regulated in 5-fluorouracil-resistant derivatives of the colon cancer cell line HCT 116.</text>
</comment>
<comment type="miscellaneous">
    <molecule>Isoform 2</molecule>
    <text evidence="13">Dubious isoform. May be produced at very low levels due to a premature stop codon in the mRNA, leading to nonsense-mediated mRNA decay.</text>
</comment>
<comment type="similarity">
    <text evidence="13">Belongs to the AAA ATPase family.</text>
</comment>
<comment type="sequence caution" evidence="13">
    <conflict type="erroneous initiation">
        <sequence resource="EMBL-CDS" id="AAF22032"/>
    </conflict>
</comment>
<comment type="sequence caution" evidence="13">
    <conflict type="miscellaneous discrepancy">
        <sequence resource="EMBL-CDS" id="AAH10686"/>
    </conflict>
    <text>Contaminating sequence. Sequence of unknown origin in the N-terminal part (676-679).</text>
</comment>
<comment type="sequence caution" evidence="13">
    <conflict type="erroneous initiation">
        <sequence resource="EMBL-CDS" id="AAH19909"/>
    </conflict>
</comment>
<organism>
    <name type="scientific">Homo sapiens</name>
    <name type="common">Human</name>
    <dbReference type="NCBI Taxonomy" id="9606"/>
    <lineage>
        <taxon>Eukaryota</taxon>
        <taxon>Metazoa</taxon>
        <taxon>Chordata</taxon>
        <taxon>Craniata</taxon>
        <taxon>Vertebrata</taxon>
        <taxon>Euteleostomi</taxon>
        <taxon>Mammalia</taxon>
        <taxon>Eutheria</taxon>
        <taxon>Euarchontoglires</taxon>
        <taxon>Primates</taxon>
        <taxon>Haplorrhini</taxon>
        <taxon>Catarrhini</taxon>
        <taxon>Hominidae</taxon>
        <taxon>Homo</taxon>
    </lineage>
</organism>
<sequence length="1390" mass="158554">MVVLRSSLELHNHSAASATGSLDLSSDFLSLEHIGRRRLRSAGAAQKKPAATTAKAGDGSSVKEVETYHRTRALRSLRKDAQNSSDSSFEKNVEITEQLANGRHFTRQLARQQADKKKEEHREDKVIPVTRSLRARNIVQSTEHLHEDNGDVEVRRSCRIRSRYSGVNQSMLFDKLITNTAEAVLQKMDDMKKMRRQRMRELEDLGVFNETEESNLNMYTRGKQKDIQRTDEETTDNQEGSVESSEEGEDQEHEDDGEDEDDEDDDDDDDDDDDDDDEDDEDEEDGEEENQKRYYLRQRKATVYYQAPLEKPRHQRKPNIFYSGPASPARPRYRLSSAGPRSPYCKRMNRRRHAIHSSDSTSSSSSEDEQHFERRRKRSRNRAINRCLPLNFRKDELKGIYKDRMKIGASLADVDPMQLDSSVRFDSVGGLSNHIAALKEMVVFPLLYPEVFEKFKIQPPRGCLFYGPPGTGKTLVARALANECSQGDKRVAFFMRKGADCLSKWVGESERQLRLLFDQAYQMRPSIIFFDEIDGLAPVRSSRQDQIHSSIVSTLLALMDGLDSRGEIVVIGATNRLDSIDPALRRPGRFDREFLFSLPDKEARKEILKIHTRDWNPKPLDTFLEELAENCVGYCGADIKSICAEAALCALRRRYPQIYTTSEKLQLDLSSINISAKDFEVAMQKMIPASQRAVTSPGQALSTVVKPLLQNTVDKILEALQRVFPHAEFRTNKTLDSDISCPLLESDLAYSDDDVPSVYENGLSQKSSHKAKDNFNFLHLNRNACYQPMSFRPRILIVGEPGFGQGSHLAPAVIHALEKFTVYTLDIPVLFGVSTTSPEETCAQVIREAKRTAPSIVYVPHIHVWWEIVGPTLKATFTTLLQNIPSFAPVLLLATSDKPHSALPEEVQELFIRDYGEIFNVQLPDKEERTKFFEDLILKQAAKPPISKKKAVLQALEVLPVAPPPEPRSLTAEEVKRLEEQEEDTFRELRIFLRNVTHRLAIDKRFRVFTKPVDPDEVPDYVTVIKQPMDLSSVISKIDLHKYLTVKDYLRDIDLICSNALEYNPDRDPGDRLIRHRACALRDTAYAIIKEELDEDFEQLCEEIQESRKKRGCSSSKYAPSYYHVMPKQNSTLVGDKRSDPEQNEKLKTPSTPVACSTPAQLKRKIRKKSNWYLGTIKKRRKISQAKDDSQNAIDHKIESDTEETQDTSVDHNETGNTGESSVEENEKQQNASESKLELRNNSNTCNIENELEDSRKTTACTELRDKIACNGDASSSQIIHISDENEGKEMCVLRMTRARRSQVEQQQLITVEKALAILSQPTPSLVVDHERLKNLLKTVVKKSQNYNIFQLENLYAVISQCIYRHRKDHDKTSLIQKMEQEVENFSCSR</sequence>
<gene>
    <name type="primary">ATAD2</name>
    <name type="ORF">L16</name>
    <name type="ORF">PRO2000</name>
</gene>
<proteinExistence type="evidence at protein level"/>
<accession>Q6PL18</accession>
<accession>Q14CR1</accession>
<accession>Q658P2</accession>
<accession>Q68CQ0</accession>
<accession>Q6PJV6</accession>
<accession>Q8N890</accession>
<accession>Q9UHS5</accession>
<dbReference type="EC" id="3.6.1.-"/>
<dbReference type="EMBL" id="AY598335">
    <property type="protein sequence ID" value="AAT06746.1"/>
    <property type="molecule type" value="mRNA"/>
</dbReference>
<dbReference type="EMBL" id="CR749832">
    <property type="protein sequence ID" value="CAH18688.1"/>
    <property type="molecule type" value="mRNA"/>
</dbReference>
<dbReference type="EMBL" id="AL833653">
    <property type="protein sequence ID" value="CAH56229.1"/>
    <property type="molecule type" value="mRNA"/>
</dbReference>
<dbReference type="EMBL" id="BC010686">
    <property type="protein sequence ID" value="AAH10686.1"/>
    <property type="status" value="ALT_SEQ"/>
    <property type="molecule type" value="mRNA"/>
</dbReference>
<dbReference type="EMBL" id="BC019909">
    <property type="protein sequence ID" value="AAH19909.1"/>
    <property type="status" value="ALT_INIT"/>
    <property type="molecule type" value="mRNA"/>
</dbReference>
<dbReference type="EMBL" id="BC113656">
    <property type="protein sequence ID" value="AAI13657.1"/>
    <property type="molecule type" value="mRNA"/>
</dbReference>
<dbReference type="EMBL" id="AK097133">
    <property type="protein sequence ID" value="BAC04959.1"/>
    <property type="molecule type" value="mRNA"/>
</dbReference>
<dbReference type="EMBL" id="AF118088">
    <property type="protein sequence ID" value="AAF22032.1"/>
    <property type="status" value="ALT_INIT"/>
    <property type="molecule type" value="mRNA"/>
</dbReference>
<dbReference type="CCDS" id="CCDS6343.1">
    <molecule id="Q6PL18-1"/>
</dbReference>
<dbReference type="RefSeq" id="NP_054828.2">
    <molecule id="Q6PL18-1"/>
    <property type="nucleotide sequence ID" value="NM_014109.3"/>
</dbReference>
<dbReference type="PDB" id="3DAI">
    <property type="method" value="X-ray"/>
    <property type="resolution" value="1.95 A"/>
    <property type="chains" value="A=981-1108"/>
</dbReference>
<dbReference type="PDB" id="4QSP">
    <property type="method" value="X-ray"/>
    <property type="resolution" value="1.60 A"/>
    <property type="chains" value="A=981-1108"/>
</dbReference>
<dbReference type="PDB" id="4QSQ">
    <property type="method" value="X-ray"/>
    <property type="resolution" value="1.80 A"/>
    <property type="chains" value="A=981-1108"/>
</dbReference>
<dbReference type="PDB" id="4QSR">
    <property type="method" value="X-ray"/>
    <property type="resolution" value="2.00 A"/>
    <property type="chains" value="A=981-1108"/>
</dbReference>
<dbReference type="PDB" id="4QSS">
    <property type="method" value="X-ray"/>
    <property type="resolution" value="2.00 A"/>
    <property type="chains" value="A=981-1108"/>
</dbReference>
<dbReference type="PDB" id="4QST">
    <property type="method" value="X-ray"/>
    <property type="resolution" value="2.05 A"/>
    <property type="chains" value="A=981-1108"/>
</dbReference>
<dbReference type="PDB" id="4QSU">
    <property type="method" value="X-ray"/>
    <property type="resolution" value="1.90 A"/>
    <property type="chains" value="A=981-1108"/>
</dbReference>
<dbReference type="PDB" id="4QSV">
    <property type="method" value="X-ray"/>
    <property type="resolution" value="1.90 A"/>
    <property type="chains" value="A=981-1108"/>
</dbReference>
<dbReference type="PDB" id="4QSW">
    <property type="method" value="X-ray"/>
    <property type="resolution" value="1.80 A"/>
    <property type="chains" value="A=981-1108"/>
</dbReference>
<dbReference type="PDB" id="4QSX">
    <property type="method" value="X-ray"/>
    <property type="resolution" value="1.93 A"/>
    <property type="chains" value="A=981-1108"/>
</dbReference>
<dbReference type="PDB" id="4QUT">
    <property type="method" value="X-ray"/>
    <property type="resolution" value="1.70 A"/>
    <property type="chains" value="A=981-1108"/>
</dbReference>
<dbReference type="PDB" id="4QUU">
    <property type="method" value="X-ray"/>
    <property type="resolution" value="1.80 A"/>
    <property type="chains" value="A=981-1108"/>
</dbReference>
<dbReference type="PDB" id="4TT2">
    <property type="method" value="X-ray"/>
    <property type="resolution" value="2.50 A"/>
    <property type="chains" value="A=981-1108"/>
</dbReference>
<dbReference type="PDB" id="4TT4">
    <property type="method" value="X-ray"/>
    <property type="resolution" value="2.70 A"/>
    <property type="chains" value="A/B=981-1108"/>
</dbReference>
<dbReference type="PDB" id="4TT6">
    <property type="method" value="X-ray"/>
    <property type="resolution" value="2.00 A"/>
    <property type="chains" value="A=981-1108"/>
</dbReference>
<dbReference type="PDB" id="4TTE">
    <property type="method" value="X-ray"/>
    <property type="resolution" value="1.80 A"/>
    <property type="chains" value="A=981-1108"/>
</dbReference>
<dbReference type="PDB" id="4TU4">
    <property type="method" value="X-ray"/>
    <property type="resolution" value="1.73 A"/>
    <property type="chains" value="A=981-1108"/>
</dbReference>
<dbReference type="PDB" id="4TU6">
    <property type="method" value="X-ray"/>
    <property type="resolution" value="2.27 A"/>
    <property type="chains" value="A/B/C/D=981-1108"/>
</dbReference>
<dbReference type="PDB" id="4TYL">
    <property type="method" value="X-ray"/>
    <property type="resolution" value="1.85 A"/>
    <property type="chains" value="A=981-1108"/>
</dbReference>
<dbReference type="PDB" id="4TZ2">
    <property type="method" value="X-ray"/>
    <property type="resolution" value="1.70 A"/>
    <property type="chains" value="A=981-1108"/>
</dbReference>
<dbReference type="PDB" id="4TZ8">
    <property type="method" value="X-ray"/>
    <property type="resolution" value="2.15 A"/>
    <property type="chains" value="A=981-1108"/>
</dbReference>
<dbReference type="PDB" id="5A5N">
    <property type="method" value="X-ray"/>
    <property type="resolution" value="1.95 A"/>
    <property type="chains" value="A=981-1108"/>
</dbReference>
<dbReference type="PDB" id="5A5O">
    <property type="method" value="X-ray"/>
    <property type="resolution" value="2.04 A"/>
    <property type="chains" value="A=981-1108"/>
</dbReference>
<dbReference type="PDB" id="5A5P">
    <property type="method" value="X-ray"/>
    <property type="resolution" value="2.03 A"/>
    <property type="chains" value="A=981-1108"/>
</dbReference>
<dbReference type="PDB" id="5A5Q">
    <property type="method" value="X-ray"/>
    <property type="resolution" value="1.97 A"/>
    <property type="chains" value="A=981-1108"/>
</dbReference>
<dbReference type="PDB" id="5A5R">
    <property type="method" value="X-ray"/>
    <property type="resolution" value="2.01 A"/>
    <property type="chains" value="A=981-1108"/>
</dbReference>
<dbReference type="PDB" id="5A81">
    <property type="method" value="X-ray"/>
    <property type="resolution" value="2.03 A"/>
    <property type="chains" value="A=981-1108"/>
</dbReference>
<dbReference type="PDB" id="5A82">
    <property type="method" value="X-ray"/>
    <property type="resolution" value="1.86 A"/>
    <property type="chains" value="A=981-1108"/>
</dbReference>
<dbReference type="PDB" id="5A83">
    <property type="method" value="X-ray"/>
    <property type="resolution" value="2.09 A"/>
    <property type="chains" value="A=981-1108"/>
</dbReference>
<dbReference type="PDB" id="5EPB">
    <property type="method" value="X-ray"/>
    <property type="resolution" value="1.50 A"/>
    <property type="chains" value="A=981-1108"/>
</dbReference>
<dbReference type="PDB" id="5F36">
    <property type="method" value="X-ray"/>
    <property type="resolution" value="1.50 A"/>
    <property type="chains" value="A=981-1108"/>
</dbReference>
<dbReference type="PDB" id="5F3A">
    <property type="method" value="X-ray"/>
    <property type="resolution" value="1.60 A"/>
    <property type="chains" value="A=981-1108"/>
</dbReference>
<dbReference type="PDB" id="5LJ0">
    <property type="method" value="X-ray"/>
    <property type="resolution" value="1.82 A"/>
    <property type="chains" value="A=981-1108"/>
</dbReference>
<dbReference type="PDB" id="5QXI">
    <property type="method" value="X-ray"/>
    <property type="resolution" value="1.64 A"/>
    <property type="chains" value="A=981-1108"/>
</dbReference>
<dbReference type="PDB" id="5QXJ">
    <property type="method" value="X-ray"/>
    <property type="resolution" value="1.46 A"/>
    <property type="chains" value="A=981-1108"/>
</dbReference>
<dbReference type="PDB" id="5QXK">
    <property type="method" value="X-ray"/>
    <property type="resolution" value="1.72 A"/>
    <property type="chains" value="A=981-1108"/>
</dbReference>
<dbReference type="PDB" id="5QXL">
    <property type="method" value="X-ray"/>
    <property type="resolution" value="1.57 A"/>
    <property type="chains" value="A=981-1108"/>
</dbReference>
<dbReference type="PDB" id="5QXM">
    <property type="method" value="X-ray"/>
    <property type="resolution" value="1.50 A"/>
    <property type="chains" value="A=981-1108"/>
</dbReference>
<dbReference type="PDB" id="5QXN">
    <property type="method" value="X-ray"/>
    <property type="resolution" value="1.41 A"/>
    <property type="chains" value="A=981-1108"/>
</dbReference>
<dbReference type="PDB" id="5QXO">
    <property type="method" value="X-ray"/>
    <property type="resolution" value="1.47 A"/>
    <property type="chains" value="A=981-1108"/>
</dbReference>
<dbReference type="PDB" id="5QXP">
    <property type="method" value="X-ray"/>
    <property type="resolution" value="1.41 A"/>
    <property type="chains" value="A=981-1108"/>
</dbReference>
<dbReference type="PDB" id="5QXQ">
    <property type="method" value="X-ray"/>
    <property type="resolution" value="1.55 A"/>
    <property type="chains" value="A=981-1108"/>
</dbReference>
<dbReference type="PDB" id="5QXR">
    <property type="method" value="X-ray"/>
    <property type="resolution" value="1.66 A"/>
    <property type="chains" value="A=981-1108"/>
</dbReference>
<dbReference type="PDB" id="5QXS">
    <property type="method" value="X-ray"/>
    <property type="resolution" value="1.62 A"/>
    <property type="chains" value="A=981-1108"/>
</dbReference>
<dbReference type="PDB" id="5QXT">
    <property type="method" value="X-ray"/>
    <property type="resolution" value="1.55 A"/>
    <property type="chains" value="A=981-1108"/>
</dbReference>
<dbReference type="PDB" id="5QXU">
    <property type="method" value="X-ray"/>
    <property type="resolution" value="1.65 A"/>
    <property type="chains" value="A=981-1108"/>
</dbReference>
<dbReference type="PDB" id="5QXV">
    <property type="method" value="X-ray"/>
    <property type="resolution" value="1.74 A"/>
    <property type="chains" value="A=981-1108"/>
</dbReference>
<dbReference type="PDB" id="5QXW">
    <property type="method" value="X-ray"/>
    <property type="resolution" value="1.78 A"/>
    <property type="chains" value="A=981-1108"/>
</dbReference>
<dbReference type="PDB" id="5QXX">
    <property type="method" value="X-ray"/>
    <property type="resolution" value="1.58 A"/>
    <property type="chains" value="A=981-1108"/>
</dbReference>
<dbReference type="PDB" id="5QXY">
    <property type="method" value="X-ray"/>
    <property type="resolution" value="1.54 A"/>
    <property type="chains" value="A=981-1108"/>
</dbReference>
<dbReference type="PDB" id="5QXZ">
    <property type="method" value="X-ray"/>
    <property type="resolution" value="1.64 A"/>
    <property type="chains" value="A=981-1108"/>
</dbReference>
<dbReference type="PDB" id="5QY0">
    <property type="method" value="X-ray"/>
    <property type="resolution" value="1.89 A"/>
    <property type="chains" value="A=981-1108"/>
</dbReference>
<dbReference type="PDB" id="5R4E">
    <property type="method" value="X-ray"/>
    <property type="resolution" value="1.83 A"/>
    <property type="chains" value="A=981-1108"/>
</dbReference>
<dbReference type="PDB" id="5R4F">
    <property type="method" value="X-ray"/>
    <property type="resolution" value="1.44 A"/>
    <property type="chains" value="A=981-1108"/>
</dbReference>
<dbReference type="PDB" id="5R4V">
    <property type="method" value="X-ray"/>
    <property type="resolution" value="1.29 A"/>
    <property type="chains" value="A=981-1108"/>
</dbReference>
<dbReference type="PDB" id="5R4W">
    <property type="method" value="X-ray"/>
    <property type="resolution" value="1.47 A"/>
    <property type="chains" value="A=981-1108"/>
</dbReference>
<dbReference type="PDB" id="5R4X">
    <property type="method" value="X-ray"/>
    <property type="resolution" value="1.40 A"/>
    <property type="chains" value="A=981-1108"/>
</dbReference>
<dbReference type="PDB" id="5R4Y">
    <property type="method" value="X-ray"/>
    <property type="resolution" value="1.84 A"/>
    <property type="chains" value="A=981-1108"/>
</dbReference>
<dbReference type="PDB" id="5R4Z">
    <property type="method" value="X-ray"/>
    <property type="resolution" value="1.46 A"/>
    <property type="chains" value="A=981-1108"/>
</dbReference>
<dbReference type="PDB" id="6CPS">
    <property type="method" value="X-ray"/>
    <property type="resolution" value="1.93 A"/>
    <property type="chains" value="A=981-1108"/>
</dbReference>
<dbReference type="PDB" id="6EPJ">
    <property type="method" value="X-ray"/>
    <property type="resolution" value="1.65 A"/>
    <property type="chains" value="A=981-1108"/>
</dbReference>
<dbReference type="PDB" id="6EPR">
    <property type="method" value="X-ray"/>
    <property type="resolution" value="2.05 A"/>
    <property type="chains" value="A=981-1108"/>
</dbReference>
<dbReference type="PDB" id="6EPS">
    <property type="method" value="X-ray"/>
    <property type="resolution" value="2.08 A"/>
    <property type="chains" value="A=981-1108"/>
</dbReference>
<dbReference type="PDB" id="6EPT">
    <property type="method" value="X-ray"/>
    <property type="resolution" value="1.65 A"/>
    <property type="chains" value="A=981-1108"/>
</dbReference>
<dbReference type="PDB" id="6EPU">
    <property type="method" value="X-ray"/>
    <property type="resolution" value="1.80 A"/>
    <property type="chains" value="A=981-1108"/>
</dbReference>
<dbReference type="PDB" id="6EPV">
    <property type="method" value="X-ray"/>
    <property type="resolution" value="1.79 A"/>
    <property type="chains" value="A=981-1108"/>
</dbReference>
<dbReference type="PDB" id="6EPW">
    <property type="method" value="X-ray"/>
    <property type="resolution" value="1.92 A"/>
    <property type="chains" value="A=981-1108"/>
</dbReference>
<dbReference type="PDB" id="6EPX">
    <property type="method" value="X-ray"/>
    <property type="resolution" value="1.84 A"/>
    <property type="chains" value="A=981-1108"/>
</dbReference>
<dbReference type="PDB" id="6HDN">
    <property type="method" value="X-ray"/>
    <property type="resolution" value="1.90 A"/>
    <property type="chains" value="A=981-1108"/>
</dbReference>
<dbReference type="PDB" id="6HDO">
    <property type="method" value="X-ray"/>
    <property type="resolution" value="2.61 A"/>
    <property type="chains" value="A=981-1108"/>
</dbReference>
<dbReference type="PDB" id="6HI3">
    <property type="method" value="X-ray"/>
    <property type="resolution" value="2.40 A"/>
    <property type="chains" value="A=981-1108"/>
</dbReference>
<dbReference type="PDB" id="6HI4">
    <property type="method" value="X-ray"/>
    <property type="resolution" value="1.69 A"/>
    <property type="chains" value="A=981-1108"/>
</dbReference>
<dbReference type="PDB" id="6HI5">
    <property type="method" value="X-ray"/>
    <property type="resolution" value="1.59 A"/>
    <property type="chains" value="A=981-1108"/>
</dbReference>
<dbReference type="PDB" id="6HI6">
    <property type="method" value="X-ray"/>
    <property type="resolution" value="1.64 A"/>
    <property type="chains" value="A=981-1108"/>
</dbReference>
<dbReference type="PDB" id="6HI7">
    <property type="method" value="X-ray"/>
    <property type="resolution" value="1.74 A"/>
    <property type="chains" value="A=981-1108"/>
</dbReference>
<dbReference type="PDB" id="6HI8">
    <property type="method" value="X-ray"/>
    <property type="resolution" value="1.90 A"/>
    <property type="chains" value="A=981-1108"/>
</dbReference>
<dbReference type="PDB" id="6HIA">
    <property type="method" value="X-ray"/>
    <property type="resolution" value="1.90 A"/>
    <property type="chains" value="A=981-1108"/>
</dbReference>
<dbReference type="PDB" id="6HIB">
    <property type="method" value="X-ray"/>
    <property type="resolution" value="2.03 A"/>
    <property type="chains" value="A=981-1108"/>
</dbReference>
<dbReference type="PDB" id="6HIC">
    <property type="method" value="X-ray"/>
    <property type="resolution" value="1.77 A"/>
    <property type="chains" value="A=981-1108"/>
</dbReference>
<dbReference type="PDB" id="6HID">
    <property type="method" value="X-ray"/>
    <property type="resolution" value="1.77 A"/>
    <property type="chains" value="A=981-1108"/>
</dbReference>
<dbReference type="PDB" id="6HIE">
    <property type="method" value="X-ray"/>
    <property type="resolution" value="2.05 A"/>
    <property type="chains" value="A=981-1108"/>
</dbReference>
<dbReference type="PDB" id="6S55">
    <property type="method" value="X-ray"/>
    <property type="resolution" value="2.09 A"/>
    <property type="chains" value="A=981-1108"/>
</dbReference>
<dbReference type="PDB" id="6S56">
    <property type="method" value="X-ray"/>
    <property type="resolution" value="2.01 A"/>
    <property type="chains" value="A=981-1108"/>
</dbReference>
<dbReference type="PDB" id="6S57">
    <property type="method" value="X-ray"/>
    <property type="resolution" value="1.82 A"/>
    <property type="chains" value="A=981-1108"/>
</dbReference>
<dbReference type="PDB" id="6YB4">
    <property type="method" value="X-ray"/>
    <property type="resolution" value="1.85 A"/>
    <property type="chains" value="AAA=981-1108"/>
</dbReference>
<dbReference type="PDB" id="7M98">
    <property type="method" value="X-ray"/>
    <property type="resolution" value="1.60 A"/>
    <property type="chains" value="A=966-1112"/>
</dbReference>
<dbReference type="PDB" id="7PPX">
    <property type="method" value="X-ray"/>
    <property type="resolution" value="1.35 A"/>
    <property type="chains" value="AAA=981-1108"/>
</dbReference>
<dbReference type="PDB" id="7PX5">
    <property type="method" value="X-ray"/>
    <property type="resolution" value="2.18 A"/>
    <property type="chains" value="AAA=981-1108"/>
</dbReference>
<dbReference type="PDB" id="7Q6T">
    <property type="method" value="X-ray"/>
    <property type="resolution" value="2.05 A"/>
    <property type="chains" value="A=981-1108"/>
</dbReference>
<dbReference type="PDB" id="7Q6U">
    <property type="method" value="X-ray"/>
    <property type="resolution" value="1.95 A"/>
    <property type="chains" value="A=981-1108"/>
</dbReference>
<dbReference type="PDB" id="7Q6V">
    <property type="method" value="X-ray"/>
    <property type="resolution" value="1.96 A"/>
    <property type="chains" value="A=981-1108"/>
</dbReference>
<dbReference type="PDB" id="7Q6W">
    <property type="method" value="X-ray"/>
    <property type="resolution" value="1.96 A"/>
    <property type="chains" value="A=981-1108"/>
</dbReference>
<dbReference type="PDB" id="7QU7">
    <property type="method" value="X-ray"/>
    <property type="resolution" value="2.13 A"/>
    <property type="chains" value="AAA=981-1108"/>
</dbReference>
<dbReference type="PDB" id="7QUK">
    <property type="method" value="X-ray"/>
    <property type="resolution" value="1.47 A"/>
    <property type="chains" value="AAA=981-1108"/>
</dbReference>
<dbReference type="PDB" id="7QUM">
    <property type="method" value="X-ray"/>
    <property type="resolution" value="1.50 A"/>
    <property type="chains" value="AAA=981-1108"/>
</dbReference>
<dbReference type="PDB" id="7QWO">
    <property type="method" value="X-ray"/>
    <property type="resolution" value="1.50 A"/>
    <property type="chains" value="AAA=981-1108"/>
</dbReference>
<dbReference type="PDB" id="7QX1">
    <property type="method" value="X-ray"/>
    <property type="resolution" value="1.49 A"/>
    <property type="chains" value="AAA=981-1108"/>
</dbReference>
<dbReference type="PDB" id="7QXT">
    <property type="method" value="X-ray"/>
    <property type="resolution" value="1.51 A"/>
    <property type="chains" value="AAA=981-1108"/>
</dbReference>
<dbReference type="PDB" id="7QYK">
    <property type="method" value="X-ray"/>
    <property type="resolution" value="1.43 A"/>
    <property type="chains" value="AAA=981-1108"/>
</dbReference>
<dbReference type="PDB" id="7QYL">
    <property type="method" value="X-ray"/>
    <property type="resolution" value="1.44 A"/>
    <property type="chains" value="AAA=981-1108"/>
</dbReference>
<dbReference type="PDB" id="7QZM">
    <property type="method" value="X-ray"/>
    <property type="resolution" value="1.45 A"/>
    <property type="chains" value="AAA=981-1108"/>
</dbReference>
<dbReference type="PDB" id="7QZY">
    <property type="method" value="X-ray"/>
    <property type="resolution" value="1.93 A"/>
    <property type="chains" value="AAA=981-1108"/>
</dbReference>
<dbReference type="PDB" id="7QZZ">
    <property type="method" value="X-ray"/>
    <property type="resolution" value="2.52 A"/>
    <property type="chains" value="AAA=981-1108"/>
</dbReference>
<dbReference type="PDB" id="7R00">
    <property type="method" value="X-ray"/>
    <property type="resolution" value="1.48 A"/>
    <property type="chains" value="AAA=981-1108"/>
</dbReference>
<dbReference type="PDB" id="7R05">
    <property type="method" value="X-ray"/>
    <property type="resolution" value="1.53 A"/>
    <property type="chains" value="AAA=981-1108"/>
</dbReference>
<dbReference type="PDB" id="7R0Y">
    <property type="method" value="X-ray"/>
    <property type="resolution" value="1.43 A"/>
    <property type="chains" value="AAA=981-1108"/>
</dbReference>
<dbReference type="PDB" id="7Z9H">
    <property type="method" value="X-ray"/>
    <property type="resolution" value="1.34 A"/>
    <property type="chains" value="AAA=981-1108"/>
</dbReference>
<dbReference type="PDB" id="7Z9I">
    <property type="method" value="X-ray"/>
    <property type="resolution" value="1.50 A"/>
    <property type="chains" value="AAA=981-1108"/>
</dbReference>
<dbReference type="PDB" id="7Z9J">
    <property type="method" value="X-ray"/>
    <property type="resolution" value="1.90 A"/>
    <property type="chains" value="AAA=981-1108"/>
</dbReference>
<dbReference type="PDB" id="7Z9N">
    <property type="method" value="X-ray"/>
    <property type="resolution" value="1.34 A"/>
    <property type="chains" value="AAA=981-1108"/>
</dbReference>
<dbReference type="PDB" id="7Z9O">
    <property type="method" value="X-ray"/>
    <property type="resolution" value="1.47 A"/>
    <property type="chains" value="AAA=981-1108"/>
</dbReference>
<dbReference type="PDB" id="7Z9S">
    <property type="method" value="X-ray"/>
    <property type="resolution" value="1.50 A"/>
    <property type="chains" value="AAA=981-1108"/>
</dbReference>
<dbReference type="PDB" id="7Z9U">
    <property type="method" value="X-ray"/>
    <property type="resolution" value="1.76 A"/>
    <property type="chains" value="AAA=981-1108"/>
</dbReference>
<dbReference type="PDB" id="8H3H">
    <property type="method" value="EM"/>
    <property type="resolution" value="3.15 A"/>
    <property type="chains" value="A/B/C/D/E/F=403-1390"/>
</dbReference>
<dbReference type="PDB" id="8JUW">
    <property type="method" value="EM"/>
    <property type="resolution" value="3.79 A"/>
    <property type="chains" value="A/B/C/D/E/F=403-1390"/>
</dbReference>
<dbReference type="PDB" id="8JUY">
    <property type="method" value="EM"/>
    <property type="resolution" value="4.34 A"/>
    <property type="chains" value="A/B/C/D/E/F=403-1390"/>
</dbReference>
<dbReference type="PDB" id="8JUZ">
    <property type="method" value="EM"/>
    <property type="resolution" value="4.29 A"/>
    <property type="chains" value="A/B/C/D/E/F=403-1390"/>
</dbReference>
<dbReference type="PDB" id="8RU5">
    <property type="method" value="X-ray"/>
    <property type="resolution" value="1.36 A"/>
    <property type="chains" value="A=981-1108"/>
</dbReference>
<dbReference type="PDB" id="8SDO">
    <property type="method" value="X-ray"/>
    <property type="resolution" value="2.01 A"/>
    <property type="chains" value="A=966-1112"/>
</dbReference>
<dbReference type="PDB" id="8SDQ">
    <property type="method" value="X-ray"/>
    <property type="resolution" value="1.85 A"/>
    <property type="chains" value="A=966-1112"/>
</dbReference>
<dbReference type="PDBsum" id="3DAI"/>
<dbReference type="PDBsum" id="4QSP"/>
<dbReference type="PDBsum" id="4QSQ"/>
<dbReference type="PDBsum" id="4QSR"/>
<dbReference type="PDBsum" id="4QSS"/>
<dbReference type="PDBsum" id="4QST"/>
<dbReference type="PDBsum" id="4QSU"/>
<dbReference type="PDBsum" id="4QSV"/>
<dbReference type="PDBsum" id="4QSW"/>
<dbReference type="PDBsum" id="4QSX"/>
<dbReference type="PDBsum" id="4QUT"/>
<dbReference type="PDBsum" id="4QUU"/>
<dbReference type="PDBsum" id="4TT2"/>
<dbReference type="PDBsum" id="4TT4"/>
<dbReference type="PDBsum" id="4TT6"/>
<dbReference type="PDBsum" id="4TTE"/>
<dbReference type="PDBsum" id="4TU4"/>
<dbReference type="PDBsum" id="4TU6"/>
<dbReference type="PDBsum" id="4TYL"/>
<dbReference type="PDBsum" id="4TZ2"/>
<dbReference type="PDBsum" id="4TZ8"/>
<dbReference type="PDBsum" id="5A5N"/>
<dbReference type="PDBsum" id="5A5O"/>
<dbReference type="PDBsum" id="5A5P"/>
<dbReference type="PDBsum" id="5A5Q"/>
<dbReference type="PDBsum" id="5A5R"/>
<dbReference type="PDBsum" id="5A81"/>
<dbReference type="PDBsum" id="5A82"/>
<dbReference type="PDBsum" id="5A83"/>
<dbReference type="PDBsum" id="5EPB"/>
<dbReference type="PDBsum" id="5F36"/>
<dbReference type="PDBsum" id="5F3A"/>
<dbReference type="PDBsum" id="5LJ0"/>
<dbReference type="PDBsum" id="5QXI"/>
<dbReference type="PDBsum" id="5QXJ"/>
<dbReference type="PDBsum" id="5QXK"/>
<dbReference type="PDBsum" id="5QXL"/>
<dbReference type="PDBsum" id="5QXM"/>
<dbReference type="PDBsum" id="5QXN"/>
<dbReference type="PDBsum" id="5QXO"/>
<dbReference type="PDBsum" id="5QXP"/>
<dbReference type="PDBsum" id="5QXQ"/>
<dbReference type="PDBsum" id="5QXR"/>
<dbReference type="PDBsum" id="5QXS"/>
<dbReference type="PDBsum" id="5QXT"/>
<dbReference type="PDBsum" id="5QXU"/>
<dbReference type="PDBsum" id="5QXV"/>
<dbReference type="PDBsum" id="5QXW"/>
<dbReference type="PDBsum" id="5QXX"/>
<dbReference type="PDBsum" id="5QXY"/>
<dbReference type="PDBsum" id="5QXZ"/>
<dbReference type="PDBsum" id="5QY0"/>
<dbReference type="PDBsum" id="5R4E"/>
<dbReference type="PDBsum" id="5R4F"/>
<dbReference type="PDBsum" id="5R4V"/>
<dbReference type="PDBsum" id="5R4W"/>
<dbReference type="PDBsum" id="5R4X"/>
<dbReference type="PDBsum" id="5R4Y"/>
<dbReference type="PDBsum" id="5R4Z"/>
<dbReference type="PDBsum" id="6CPS"/>
<dbReference type="PDBsum" id="6EPJ"/>
<dbReference type="PDBsum" id="6EPR"/>
<dbReference type="PDBsum" id="6EPS"/>
<dbReference type="PDBsum" id="6EPT"/>
<dbReference type="PDBsum" id="6EPU"/>
<dbReference type="PDBsum" id="6EPV"/>
<dbReference type="PDBsum" id="6EPW"/>
<dbReference type="PDBsum" id="6EPX"/>
<dbReference type="PDBsum" id="6HDN"/>
<dbReference type="PDBsum" id="6HDO"/>
<dbReference type="PDBsum" id="6HI3"/>
<dbReference type="PDBsum" id="6HI4"/>
<dbReference type="PDBsum" id="6HI5"/>
<dbReference type="PDBsum" id="6HI6"/>
<dbReference type="PDBsum" id="6HI7"/>
<dbReference type="PDBsum" id="6HI8"/>
<dbReference type="PDBsum" id="6HIA"/>
<dbReference type="PDBsum" id="6HIB"/>
<dbReference type="PDBsum" id="6HIC"/>
<dbReference type="PDBsum" id="6HID"/>
<dbReference type="PDBsum" id="6HIE"/>
<dbReference type="PDBsum" id="6S55"/>
<dbReference type="PDBsum" id="6S56"/>
<dbReference type="PDBsum" id="6S57"/>
<dbReference type="PDBsum" id="6YB4"/>
<dbReference type="PDBsum" id="7M98"/>
<dbReference type="PDBsum" id="7PPX"/>
<dbReference type="PDBsum" id="7PX5"/>
<dbReference type="PDBsum" id="7Q6T"/>
<dbReference type="PDBsum" id="7Q6U"/>
<dbReference type="PDBsum" id="7Q6V"/>
<dbReference type="PDBsum" id="7Q6W"/>
<dbReference type="PDBsum" id="7QU7"/>
<dbReference type="PDBsum" id="7QUK"/>
<dbReference type="PDBsum" id="7QUM"/>
<dbReference type="PDBsum" id="7QWO"/>
<dbReference type="PDBsum" id="7QX1"/>
<dbReference type="PDBsum" id="7QXT"/>
<dbReference type="PDBsum" id="7QYK"/>
<dbReference type="PDBsum" id="7QYL"/>
<dbReference type="PDBsum" id="7QZM"/>
<dbReference type="PDBsum" id="7QZY"/>
<dbReference type="PDBsum" id="7QZZ"/>
<dbReference type="PDBsum" id="7R00"/>
<dbReference type="PDBsum" id="7R05"/>
<dbReference type="PDBsum" id="7R0Y"/>
<dbReference type="PDBsum" id="7Z9H"/>
<dbReference type="PDBsum" id="7Z9I"/>
<dbReference type="PDBsum" id="7Z9J"/>
<dbReference type="PDBsum" id="7Z9N"/>
<dbReference type="PDBsum" id="7Z9O"/>
<dbReference type="PDBsum" id="7Z9S"/>
<dbReference type="PDBsum" id="7Z9U"/>
<dbReference type="PDBsum" id="8H3H"/>
<dbReference type="PDBsum" id="8JUW"/>
<dbReference type="PDBsum" id="8JUY"/>
<dbReference type="PDBsum" id="8JUZ"/>
<dbReference type="PDBsum" id="8RU5"/>
<dbReference type="PDBsum" id="8SDO"/>
<dbReference type="PDBsum" id="8SDQ"/>
<dbReference type="EMDB" id="EMD-34468"/>
<dbReference type="EMDB" id="EMD-36665"/>
<dbReference type="EMDB" id="EMD-36666"/>
<dbReference type="EMDB" id="EMD-36667"/>
<dbReference type="SMR" id="Q6PL18"/>
<dbReference type="BioGRID" id="118827">
    <property type="interactions" value="62"/>
</dbReference>
<dbReference type="DIP" id="DIP-46197N"/>
<dbReference type="FunCoup" id="Q6PL18">
    <property type="interactions" value="2711"/>
</dbReference>
<dbReference type="IntAct" id="Q6PL18">
    <property type="interactions" value="32"/>
</dbReference>
<dbReference type="MINT" id="Q6PL18"/>
<dbReference type="STRING" id="9606.ENSP00000287394"/>
<dbReference type="BindingDB" id="Q6PL18"/>
<dbReference type="ChEMBL" id="CHEMBL2150837"/>
<dbReference type="GuidetoPHARMACOLOGY" id="2719"/>
<dbReference type="GlyGen" id="Q6PL18">
    <property type="glycosylation" value="2 sites, 1 O-linked glycan (1 site)"/>
</dbReference>
<dbReference type="iPTMnet" id="Q6PL18"/>
<dbReference type="PhosphoSitePlus" id="Q6PL18"/>
<dbReference type="SwissPalm" id="Q6PL18"/>
<dbReference type="BioMuta" id="ATAD2"/>
<dbReference type="DMDM" id="74762365"/>
<dbReference type="jPOST" id="Q6PL18"/>
<dbReference type="MassIVE" id="Q6PL18"/>
<dbReference type="PaxDb" id="9606-ENSP00000287394"/>
<dbReference type="PeptideAtlas" id="Q6PL18"/>
<dbReference type="ProteomicsDB" id="67248">
    <molecule id="Q6PL18-1"/>
</dbReference>
<dbReference type="ProteomicsDB" id="67249">
    <molecule id="Q6PL18-2"/>
</dbReference>
<dbReference type="Pumba" id="Q6PL18"/>
<dbReference type="Antibodypedia" id="13822">
    <property type="antibodies" value="174 antibodies from 28 providers"/>
</dbReference>
<dbReference type="DNASU" id="29028"/>
<dbReference type="Ensembl" id="ENST00000287394.10">
    <molecule id="Q6PL18-1"/>
    <property type="protein sequence ID" value="ENSP00000287394.5"/>
    <property type="gene ID" value="ENSG00000156802.13"/>
</dbReference>
<dbReference type="GeneID" id="29028"/>
<dbReference type="KEGG" id="hsa:29028"/>
<dbReference type="MANE-Select" id="ENST00000287394.10">
    <property type="protein sequence ID" value="ENSP00000287394.5"/>
    <property type="RefSeq nucleotide sequence ID" value="NM_014109.4"/>
    <property type="RefSeq protein sequence ID" value="NP_054828.2"/>
</dbReference>
<dbReference type="UCSC" id="uc003yqh.5">
    <molecule id="Q6PL18-1"/>
    <property type="organism name" value="human"/>
</dbReference>
<dbReference type="AGR" id="HGNC:30123"/>
<dbReference type="CTD" id="29028"/>
<dbReference type="DisGeNET" id="29028"/>
<dbReference type="GeneCards" id="ATAD2"/>
<dbReference type="HGNC" id="HGNC:30123">
    <property type="gene designation" value="ATAD2"/>
</dbReference>
<dbReference type="HPA" id="ENSG00000156802">
    <property type="expression patterns" value="Tissue enhanced (bone marrow, lymphoid tissue)"/>
</dbReference>
<dbReference type="MIM" id="611941">
    <property type="type" value="gene"/>
</dbReference>
<dbReference type="neXtProt" id="NX_Q6PL18"/>
<dbReference type="OpenTargets" id="ENSG00000156802"/>
<dbReference type="PharmGKB" id="PA134895566"/>
<dbReference type="VEuPathDB" id="HostDB:ENSG00000156802"/>
<dbReference type="eggNOG" id="KOG0732">
    <property type="taxonomic scope" value="Eukaryota"/>
</dbReference>
<dbReference type="GeneTree" id="ENSGT00550000074694"/>
<dbReference type="HOGENOM" id="CLU_001448_3_2_1"/>
<dbReference type="InParanoid" id="Q6PL18"/>
<dbReference type="OMA" id="NRNACHQ"/>
<dbReference type="OrthoDB" id="5421at2759"/>
<dbReference type="PAN-GO" id="Q6PL18">
    <property type="GO annotations" value="5 GO annotations based on evolutionary models"/>
</dbReference>
<dbReference type="PhylomeDB" id="Q6PL18"/>
<dbReference type="TreeFam" id="TF314783"/>
<dbReference type="PathwayCommons" id="Q6PL18"/>
<dbReference type="Reactome" id="R-HSA-8866910">
    <property type="pathway name" value="TFAP2 (AP-2) family regulates transcription of growth factors and their receptors"/>
</dbReference>
<dbReference type="SignaLink" id="Q6PL18"/>
<dbReference type="BioGRID-ORCS" id="29028">
    <property type="hits" value="37 hits in 1174 CRISPR screens"/>
</dbReference>
<dbReference type="CD-CODE" id="DEE660B4">
    <property type="entry name" value="Stress granule"/>
</dbReference>
<dbReference type="ChiTaRS" id="ATAD2">
    <property type="organism name" value="human"/>
</dbReference>
<dbReference type="EvolutionaryTrace" id="Q6PL18"/>
<dbReference type="GenomeRNAi" id="29028"/>
<dbReference type="Pharos" id="Q6PL18">
    <property type="development level" value="Tchem"/>
</dbReference>
<dbReference type="PRO" id="PR:Q6PL18"/>
<dbReference type="Proteomes" id="UP000005640">
    <property type="component" value="Chromosome 8"/>
</dbReference>
<dbReference type="RNAct" id="Q6PL18">
    <property type="molecule type" value="protein"/>
</dbReference>
<dbReference type="Bgee" id="ENSG00000156802">
    <property type="expression patterns" value="Expressed in secondary oocyte and 146 other cell types or tissues"/>
</dbReference>
<dbReference type="ExpressionAtlas" id="Q6PL18">
    <property type="expression patterns" value="baseline and differential"/>
</dbReference>
<dbReference type="GO" id="GO:0070062">
    <property type="term" value="C:extracellular exosome"/>
    <property type="evidence" value="ECO:0007005"/>
    <property type="project" value="UniProtKB"/>
</dbReference>
<dbReference type="GO" id="GO:0005654">
    <property type="term" value="C:nucleoplasm"/>
    <property type="evidence" value="ECO:0000314"/>
    <property type="project" value="HPA"/>
</dbReference>
<dbReference type="GO" id="GO:0005634">
    <property type="term" value="C:nucleus"/>
    <property type="evidence" value="ECO:0000314"/>
    <property type="project" value="UniProtKB"/>
</dbReference>
<dbReference type="GO" id="GO:0005524">
    <property type="term" value="F:ATP binding"/>
    <property type="evidence" value="ECO:0007669"/>
    <property type="project" value="UniProtKB-KW"/>
</dbReference>
<dbReference type="GO" id="GO:0016887">
    <property type="term" value="F:ATP hydrolysis activity"/>
    <property type="evidence" value="ECO:0000314"/>
    <property type="project" value="UniProtKB"/>
</dbReference>
<dbReference type="GO" id="GO:0003682">
    <property type="term" value="F:chromatin binding"/>
    <property type="evidence" value="ECO:0000318"/>
    <property type="project" value="GO_Central"/>
</dbReference>
<dbReference type="GO" id="GO:0042393">
    <property type="term" value="F:histone binding"/>
    <property type="evidence" value="ECO:0000318"/>
    <property type="project" value="GO_Central"/>
</dbReference>
<dbReference type="GO" id="GO:0006334">
    <property type="term" value="P:nucleosome assembly"/>
    <property type="evidence" value="ECO:0000318"/>
    <property type="project" value="GO_Central"/>
</dbReference>
<dbReference type="GO" id="GO:0006337">
    <property type="term" value="P:nucleosome disassembly"/>
    <property type="evidence" value="ECO:0000318"/>
    <property type="project" value="GO_Central"/>
</dbReference>
<dbReference type="GO" id="GO:0045893">
    <property type="term" value="P:positive regulation of DNA-templated transcription"/>
    <property type="evidence" value="ECO:0000314"/>
    <property type="project" value="UniProtKB"/>
</dbReference>
<dbReference type="GO" id="GO:0045815">
    <property type="term" value="P:transcription initiation-coupled chromatin remodeling"/>
    <property type="evidence" value="ECO:0000318"/>
    <property type="project" value="GO_Central"/>
</dbReference>
<dbReference type="CDD" id="cd05528">
    <property type="entry name" value="Bromo_AAA"/>
    <property type="match status" value="1"/>
</dbReference>
<dbReference type="CDD" id="cd19517">
    <property type="entry name" value="RecA-like_Yta7-like"/>
    <property type="match status" value="1"/>
</dbReference>
<dbReference type="FunFam" id="1.20.920.10:FF:000021">
    <property type="entry name" value="ATPase family AAA domain-containing protein 2"/>
    <property type="match status" value="1"/>
</dbReference>
<dbReference type="FunFam" id="1.10.8.60:FF:000016">
    <property type="entry name" value="ATPase family AAA domain-containing protein 2B"/>
    <property type="match status" value="1"/>
</dbReference>
<dbReference type="FunFam" id="3.40.50.300:FF:000734">
    <property type="entry name" value="ATPase family, AAA domain containing 2"/>
    <property type="match status" value="1"/>
</dbReference>
<dbReference type="FunFam" id="3.40.50.300:FF:000061">
    <property type="entry name" value="ATPase family, AAA domain-containing 2"/>
    <property type="match status" value="1"/>
</dbReference>
<dbReference type="Gene3D" id="1.10.8.60">
    <property type="match status" value="1"/>
</dbReference>
<dbReference type="Gene3D" id="1.20.920.10">
    <property type="entry name" value="Bromodomain-like"/>
    <property type="match status" value="1"/>
</dbReference>
<dbReference type="Gene3D" id="3.40.50.300">
    <property type="entry name" value="P-loop containing nucleotide triphosphate hydrolases"/>
    <property type="match status" value="2"/>
</dbReference>
<dbReference type="IDEAL" id="IID00570"/>
<dbReference type="InterPro" id="IPR003593">
    <property type="entry name" value="AAA+_ATPase"/>
</dbReference>
<dbReference type="InterPro" id="IPR041569">
    <property type="entry name" value="AAA_lid_3"/>
</dbReference>
<dbReference type="InterPro" id="IPR045199">
    <property type="entry name" value="ATAD2-like"/>
</dbReference>
<dbReference type="InterPro" id="IPR003959">
    <property type="entry name" value="ATPase_AAA_core"/>
</dbReference>
<dbReference type="InterPro" id="IPR003960">
    <property type="entry name" value="ATPase_AAA_CS"/>
</dbReference>
<dbReference type="InterPro" id="IPR001487">
    <property type="entry name" value="Bromodomain"/>
</dbReference>
<dbReference type="InterPro" id="IPR036427">
    <property type="entry name" value="Bromodomain-like_sf"/>
</dbReference>
<dbReference type="InterPro" id="IPR027417">
    <property type="entry name" value="P-loop_NTPase"/>
</dbReference>
<dbReference type="PANTHER" id="PTHR23069">
    <property type="entry name" value="AAA DOMAIN-CONTAINING"/>
    <property type="match status" value="1"/>
</dbReference>
<dbReference type="PANTHER" id="PTHR23069:SF4">
    <property type="entry name" value="ATPASE FAMILY AAA DOMAIN-CONTAINING PROTEIN 2"/>
    <property type="match status" value="1"/>
</dbReference>
<dbReference type="Pfam" id="PF00004">
    <property type="entry name" value="AAA"/>
    <property type="match status" value="1"/>
</dbReference>
<dbReference type="Pfam" id="PF17862">
    <property type="entry name" value="AAA_lid_3"/>
    <property type="match status" value="1"/>
</dbReference>
<dbReference type="Pfam" id="PF00439">
    <property type="entry name" value="Bromodomain"/>
    <property type="match status" value="1"/>
</dbReference>
<dbReference type="PRINTS" id="PR00503">
    <property type="entry name" value="BROMODOMAIN"/>
</dbReference>
<dbReference type="SMART" id="SM00382">
    <property type="entry name" value="AAA"/>
    <property type="match status" value="1"/>
</dbReference>
<dbReference type="SMART" id="SM00297">
    <property type="entry name" value="BROMO"/>
    <property type="match status" value="1"/>
</dbReference>
<dbReference type="SUPFAM" id="SSF47370">
    <property type="entry name" value="Bromodomain"/>
    <property type="match status" value="1"/>
</dbReference>
<dbReference type="SUPFAM" id="SSF52540">
    <property type="entry name" value="P-loop containing nucleoside triphosphate hydrolases"/>
    <property type="match status" value="2"/>
</dbReference>
<dbReference type="PROSITE" id="PS00674">
    <property type="entry name" value="AAA"/>
    <property type="match status" value="1"/>
</dbReference>
<dbReference type="PROSITE" id="PS50014">
    <property type="entry name" value="BROMODOMAIN_2"/>
    <property type="match status" value="1"/>
</dbReference>
<name>ATAD2_HUMAN</name>
<keyword id="KW-0002">3D-structure</keyword>
<keyword id="KW-0010">Activator</keyword>
<keyword id="KW-0025">Alternative splicing</keyword>
<keyword id="KW-0067">ATP-binding</keyword>
<keyword id="KW-0103">Bromodomain</keyword>
<keyword id="KW-0175">Coiled coil</keyword>
<keyword id="KW-0378">Hydrolase</keyword>
<keyword id="KW-1017">Isopeptide bond</keyword>
<keyword id="KW-0547">Nucleotide-binding</keyword>
<keyword id="KW-0539">Nucleus</keyword>
<keyword id="KW-0597">Phosphoprotein</keyword>
<keyword id="KW-1267">Proteomics identification</keyword>
<keyword id="KW-1185">Reference proteome</keyword>
<keyword id="KW-0804">Transcription</keyword>
<keyword id="KW-0805">Transcription regulation</keyword>
<keyword id="KW-0832">Ubl conjugation</keyword>
<feature type="chain" id="PRO_0000084796" description="ATPase family AAA domain-containing protein 2">
    <location>
        <begin position="1"/>
        <end position="1390"/>
    </location>
</feature>
<feature type="domain" description="Bromo" evidence="2">
    <location>
        <begin position="980"/>
        <end position="1092"/>
    </location>
</feature>
<feature type="region of interest" description="Disordered" evidence="3">
    <location>
        <begin position="40"/>
        <end position="63"/>
    </location>
</feature>
<feature type="region of interest" description="Disordered" evidence="3">
    <location>
        <begin position="216"/>
        <end position="380"/>
    </location>
</feature>
<feature type="region of interest" description="Disordered" evidence="3">
    <location>
        <begin position="1124"/>
        <end position="1163"/>
    </location>
</feature>
<feature type="region of interest" description="Disordered" evidence="3">
    <location>
        <begin position="1181"/>
        <end position="1242"/>
    </location>
</feature>
<feature type="coiled-coil region" evidence="1">
    <location>
        <begin position="970"/>
        <end position="994"/>
    </location>
</feature>
<feature type="coiled-coil region" evidence="1">
    <location>
        <begin position="1086"/>
        <end position="1112"/>
    </location>
</feature>
<feature type="compositionally biased region" description="Low complexity" evidence="3">
    <location>
        <begin position="42"/>
        <end position="57"/>
    </location>
</feature>
<feature type="compositionally biased region" description="Basic and acidic residues" evidence="3">
    <location>
        <begin position="223"/>
        <end position="232"/>
    </location>
</feature>
<feature type="compositionally biased region" description="Acidic residues" evidence="3">
    <location>
        <begin position="244"/>
        <end position="288"/>
    </location>
</feature>
<feature type="compositionally biased region" description="Basic and acidic residues" evidence="3">
    <location>
        <begin position="1135"/>
        <end position="1148"/>
    </location>
</feature>
<feature type="compositionally biased region" description="Polar residues" evidence="3">
    <location>
        <begin position="1149"/>
        <end position="1160"/>
    </location>
</feature>
<feature type="compositionally biased region" description="Basic and acidic residues" evidence="3">
    <location>
        <begin position="1185"/>
        <end position="1200"/>
    </location>
</feature>
<feature type="compositionally biased region" description="Polar residues" evidence="3">
    <location>
        <begin position="1229"/>
        <end position="1242"/>
    </location>
</feature>
<feature type="binding site" evidence="1">
    <location>
        <begin position="467"/>
        <end position="474"/>
    </location>
    <ligand>
        <name>ATP</name>
        <dbReference type="ChEBI" id="CHEBI:30616"/>
    </ligand>
</feature>
<feature type="modified residue" description="Phosphoserine" evidence="18">
    <location>
        <position position="60"/>
    </location>
</feature>
<feature type="modified residue" description="Phosphoserine" evidence="18">
    <location>
        <position position="61"/>
    </location>
</feature>
<feature type="modified residue" description="Phosphoserine" evidence="18">
    <location>
        <position position="165"/>
    </location>
</feature>
<feature type="modified residue" description="Phosphoserine" evidence="15 18">
    <location>
        <position position="170"/>
    </location>
</feature>
<feature type="modified residue" description="Phosphoserine" evidence="16 17 18">
    <location>
        <position position="327"/>
    </location>
</feature>
<feature type="modified residue" description="Phosphoserine" evidence="16 18">
    <location>
        <position position="337"/>
    </location>
</feature>
<feature type="modified residue" description="Phosphoserine" evidence="18">
    <location>
        <position position="342"/>
    </location>
</feature>
<feature type="modified residue" description="Phosphoserine" evidence="18">
    <location>
        <position position="410"/>
    </location>
</feature>
<feature type="modified residue" description="Phosphoserine" evidence="14">
    <location>
        <position position="746"/>
    </location>
</feature>
<feature type="modified residue" description="Phosphoserine" evidence="14">
    <location>
        <position position="751"/>
    </location>
</feature>
<feature type="modified residue" description="Phosphoserine" evidence="18">
    <location>
        <position position="1139"/>
    </location>
</feature>
<feature type="modified residue" description="Phosphothreonine" evidence="14">
    <location>
        <position position="1149"/>
    </location>
</feature>
<feature type="modified residue" description="Phosphothreonine" evidence="14">
    <location>
        <position position="1152"/>
    </location>
</feature>
<feature type="modified residue" description="Phosphothreonine" evidence="18">
    <location>
        <position position="1176"/>
    </location>
</feature>
<feature type="modified residue" description="Phosphoserine" evidence="18 19">
    <location>
        <position position="1200"/>
    </location>
</feature>
<feature type="modified residue" description="Phosphoserine" evidence="18">
    <location>
        <position position="1233"/>
    </location>
</feature>
<feature type="modified residue" description="Phosphoserine" evidence="18">
    <location>
        <position position="1235"/>
    </location>
</feature>
<feature type="modified residue" description="Phosphoserine" evidence="18">
    <location>
        <position position="1243"/>
    </location>
</feature>
<feature type="modified residue" description="Phosphoserine" evidence="14 15 16 18">
    <location>
        <position position="1302"/>
    </location>
</feature>
<feature type="modified residue" description="Phosphothreonine" evidence="18">
    <location>
        <position position="1323"/>
    </location>
</feature>
<feature type="cross-link" description="Glycyl lysine isopeptide (Lys-Gly) (interchain with G-Cter in SUMO2)" evidence="20">
    <location>
        <position position="125"/>
    </location>
</feature>
<feature type="cross-link" description="Glycyl lysine isopeptide (Lys-Gly) (interchain with G-Cter in SUMO2)" evidence="20">
    <location>
        <position position="317"/>
    </location>
</feature>
<feature type="cross-link" description="Glycyl lysine isopeptide (Lys-Gly) (interchain with G-Cter in SUMO2)" evidence="20">
    <location>
        <position position="1128"/>
    </location>
</feature>
<feature type="cross-link" description="Glycyl lysine isopeptide (Lys-Gly) (interchain with G-Cter in SUMO2)" evidence="20">
    <location>
        <position position="1148"/>
    </location>
</feature>
<feature type="cross-link" description="Glycyl lysine isopeptide (Lys-Gly) (interchain with G-Cter in SUMO2)" evidence="20">
    <location>
        <position position="1236"/>
    </location>
</feature>
<feature type="splice variant" id="VSP_015633" description="In isoform 2." evidence="12">
    <location>
        <begin position="1"/>
        <end position="170"/>
    </location>
</feature>
<feature type="splice variant" id="VSP_015634" description="In isoform 2." evidence="12">
    <original>IVSTLLALMDGLDSRGEIVVIGATNRLDSIDP</original>
    <variation>YGWIGQQRGNCGHWCYEQARFYRSCFTKAWSL</variation>
    <location>
        <begin position="551"/>
        <end position="582"/>
    </location>
</feature>
<feature type="splice variant" id="VSP_015635" description="In isoform 2." evidence="12">
    <location>
        <begin position="583"/>
        <end position="1390"/>
    </location>
</feature>
<feature type="sequence variant" id="VAR_047625" description="In dbSNP:rs3758122.">
    <original>I</original>
    <variation>T</variation>
    <location>
        <position position="1280"/>
    </location>
</feature>
<feature type="mutagenesis site" description="Reduces the ability to mediate estradiol-dependent induction of CCND1 and E2F1; when associated with Q-532." evidence="9">
    <original>K</original>
    <variation>T</variation>
    <location>
        <position position="473"/>
    </location>
</feature>
<feature type="mutagenesis site" description="Reduces the ability to mediate estradiol-dependent induction of CCND1 and E2F1; when associated with T-473." evidence="9">
    <original>E</original>
    <variation>Q</variation>
    <location>
        <position position="532"/>
    </location>
</feature>
<feature type="strand" evidence="22">
    <location>
        <begin position="424"/>
        <end position="427"/>
    </location>
</feature>
<feature type="helix" evidence="22">
    <location>
        <begin position="435"/>
        <end position="438"/>
    </location>
</feature>
<feature type="turn" evidence="22">
    <location>
        <begin position="439"/>
        <end position="442"/>
    </location>
</feature>
<feature type="helix" evidence="22">
    <location>
        <begin position="444"/>
        <end position="447"/>
    </location>
</feature>
<feature type="helix" evidence="22">
    <location>
        <begin position="451"/>
        <end position="454"/>
    </location>
</feature>
<feature type="strand" evidence="22">
    <location>
        <begin position="462"/>
        <end position="468"/>
    </location>
</feature>
<feature type="strand" evidence="22">
    <location>
        <begin position="471"/>
        <end position="473"/>
    </location>
</feature>
<feature type="helix" evidence="22">
    <location>
        <begin position="474"/>
        <end position="484"/>
    </location>
</feature>
<feature type="strand" evidence="22">
    <location>
        <begin position="492"/>
        <end position="501"/>
    </location>
</feature>
<feature type="helix" evidence="22">
    <location>
        <begin position="508"/>
        <end position="523"/>
    </location>
</feature>
<feature type="strand" evidence="22">
    <location>
        <begin position="525"/>
        <end position="531"/>
    </location>
</feature>
<feature type="helix" evidence="22">
    <location>
        <begin position="533"/>
        <end position="535"/>
    </location>
</feature>
<feature type="strand" evidence="22">
    <location>
        <begin position="542"/>
        <end position="544"/>
    </location>
</feature>
<feature type="helix" evidence="22">
    <location>
        <begin position="549"/>
        <end position="559"/>
    </location>
</feature>
<feature type="strand" evidence="22">
    <location>
        <begin position="567"/>
        <end position="575"/>
    </location>
</feature>
<feature type="helix" evidence="22">
    <location>
        <begin position="577"/>
        <end position="579"/>
    </location>
</feature>
<feature type="turn" evidence="22">
    <location>
        <begin position="587"/>
        <end position="589"/>
    </location>
</feature>
<feature type="strand" evidence="22">
    <location>
        <begin position="593"/>
        <end position="595"/>
    </location>
</feature>
<feature type="helix" evidence="22">
    <location>
        <begin position="601"/>
        <end position="611"/>
    </location>
</feature>
<feature type="helix" evidence="22">
    <location>
        <begin position="621"/>
        <end position="630"/>
    </location>
</feature>
<feature type="helix" evidence="22">
    <location>
        <begin position="637"/>
        <end position="654"/>
    </location>
</feature>
<feature type="helix" evidence="22">
    <location>
        <begin position="680"/>
        <end position="684"/>
    </location>
</feature>
<feature type="turn" evidence="22">
    <location>
        <begin position="690"/>
        <end position="692"/>
    </location>
</feature>
<feature type="turn" evidence="22">
    <location>
        <begin position="703"/>
        <end position="705"/>
    </location>
</feature>
<feature type="helix" evidence="22">
    <location>
        <begin position="706"/>
        <end position="716"/>
    </location>
</feature>
<feature type="turn" evidence="22">
    <location>
        <begin position="721"/>
        <end position="723"/>
    </location>
</feature>
<feature type="helix" evidence="22">
    <location>
        <begin position="725"/>
        <end position="728"/>
    </location>
</feature>
<feature type="strand" evidence="22">
    <location>
        <begin position="794"/>
        <end position="798"/>
    </location>
</feature>
<feature type="turn" evidence="22">
    <location>
        <begin position="805"/>
        <end position="808"/>
    </location>
</feature>
<feature type="helix" evidence="22">
    <location>
        <begin position="809"/>
        <end position="816"/>
    </location>
</feature>
<feature type="turn" evidence="22">
    <location>
        <begin position="817"/>
        <end position="819"/>
    </location>
</feature>
<feature type="strand" evidence="22">
    <location>
        <begin position="820"/>
        <end position="824"/>
    </location>
</feature>
<feature type="helix" evidence="22">
    <location>
        <begin position="827"/>
        <end position="830"/>
    </location>
</feature>
<feature type="helix" evidence="22">
    <location>
        <begin position="838"/>
        <end position="851"/>
    </location>
</feature>
<feature type="strand" evidence="22">
    <location>
        <begin position="854"/>
        <end position="859"/>
    </location>
</feature>
<feature type="helix" evidence="22">
    <location>
        <begin position="862"/>
        <end position="865"/>
    </location>
</feature>
<feature type="turn" evidence="22">
    <location>
        <begin position="866"/>
        <end position="868"/>
    </location>
</feature>
<feature type="helix" evidence="22">
    <location>
        <begin position="871"/>
        <end position="880"/>
    </location>
</feature>
<feature type="strand" evidence="22">
    <location>
        <begin position="890"/>
        <end position="898"/>
    </location>
</feature>
<feature type="helix" evidence="22">
    <location>
        <begin position="900"/>
        <end position="902"/>
    </location>
</feature>
<feature type="helix" evidence="22">
    <location>
        <begin position="905"/>
        <end position="908"/>
    </location>
</feature>
<feature type="helix" evidence="22">
    <location>
        <begin position="913"/>
        <end position="915"/>
    </location>
</feature>
<feature type="strand" evidence="22">
    <location>
        <begin position="918"/>
        <end position="920"/>
    </location>
</feature>
<feature type="helix" evidence="22">
    <location>
        <begin position="926"/>
        <end position="937"/>
    </location>
</feature>
<feature type="helix" evidence="22">
    <location>
        <begin position="940"/>
        <end position="942"/>
    </location>
</feature>
<feature type="helix" evidence="21">
    <location>
        <begin position="981"/>
        <end position="1001"/>
    </location>
</feature>
<feature type="helix" evidence="21">
    <location>
        <begin position="1004"/>
        <end position="1009"/>
    </location>
</feature>
<feature type="turn" evidence="21">
    <location>
        <begin position="1015"/>
        <end position="1017"/>
    </location>
</feature>
<feature type="helix" evidence="21">
    <location>
        <begin position="1021"/>
        <end position="1024"/>
    </location>
</feature>
<feature type="helix" evidence="21">
    <location>
        <begin position="1031"/>
        <end position="1039"/>
    </location>
</feature>
<feature type="helix" evidence="21">
    <location>
        <begin position="1046"/>
        <end position="1063"/>
    </location>
</feature>
<feature type="strand" evidence="21">
    <location>
        <begin position="1066"/>
        <end position="1068"/>
    </location>
</feature>
<feature type="helix" evidence="21">
    <location>
        <begin position="1069"/>
        <end position="1092"/>
    </location>
</feature>
<feature type="helix" evidence="21">
    <location>
        <begin position="1095"/>
        <end position="1107"/>
    </location>
</feature>
<feature type="helix" evidence="22">
    <location>
        <begin position="1332"/>
        <end position="1343"/>
    </location>
</feature>
<feature type="helix" evidence="22">
    <location>
        <begin position="1349"/>
        <end position="1352"/>
    </location>
</feature>
<feature type="turn" evidence="22">
    <location>
        <begin position="1353"/>
        <end position="1359"/>
    </location>
</feature>
<feature type="helix" evidence="22">
    <location>
        <begin position="1360"/>
        <end position="1365"/>
    </location>
</feature>
<feature type="turn" evidence="22">
    <location>
        <begin position="1372"/>
        <end position="1375"/>
    </location>
</feature>
<feature type="helix" evidence="22">
    <location>
        <begin position="1376"/>
        <end position="1383"/>
    </location>
</feature>
<evidence type="ECO:0000255" key="1"/>
<evidence type="ECO:0000255" key="2">
    <source>
        <dbReference type="PROSITE-ProRule" id="PRU00035"/>
    </source>
</evidence>
<evidence type="ECO:0000256" key="3">
    <source>
        <dbReference type="SAM" id="MobiDB-lite"/>
    </source>
</evidence>
<evidence type="ECO:0000269" key="4">
    <source>
    </source>
</evidence>
<evidence type="ECO:0000269" key="5">
    <source>
    </source>
</evidence>
<evidence type="ECO:0000269" key="6">
    <source>
    </source>
</evidence>
<evidence type="ECO:0000269" key="7">
    <source>
    </source>
</evidence>
<evidence type="ECO:0000269" key="8">
    <source>
    </source>
</evidence>
<evidence type="ECO:0000269" key="9">
    <source>
    </source>
</evidence>
<evidence type="ECO:0000269" key="10">
    <source>
    </source>
</evidence>
<evidence type="ECO:0000269" key="11">
    <source>
    </source>
</evidence>
<evidence type="ECO:0000303" key="12">
    <source>
    </source>
</evidence>
<evidence type="ECO:0000305" key="13"/>
<evidence type="ECO:0007744" key="14">
    <source>
    </source>
</evidence>
<evidence type="ECO:0007744" key="15">
    <source>
    </source>
</evidence>
<evidence type="ECO:0007744" key="16">
    <source>
    </source>
</evidence>
<evidence type="ECO:0007744" key="17">
    <source>
    </source>
</evidence>
<evidence type="ECO:0007744" key="18">
    <source>
    </source>
</evidence>
<evidence type="ECO:0007744" key="19">
    <source>
    </source>
</evidence>
<evidence type="ECO:0007744" key="20">
    <source>
    </source>
</evidence>
<evidence type="ECO:0007829" key="21">
    <source>
        <dbReference type="PDB" id="5R4V"/>
    </source>
</evidence>
<evidence type="ECO:0007829" key="22">
    <source>
        <dbReference type="PDB" id="8H3H"/>
    </source>
</evidence>